<feature type="chain" id="PRO_0000346960" description="Uncharacterized protein DDB_G0289137">
    <location>
        <begin position="1"/>
        <end position="90"/>
    </location>
</feature>
<feature type="region of interest" description="Disordered" evidence="2">
    <location>
        <begin position="1"/>
        <end position="26"/>
    </location>
</feature>
<feature type="coiled-coil region" evidence="1">
    <location>
        <begin position="33"/>
        <end position="66"/>
    </location>
</feature>
<keyword id="KW-0175">Coiled coil</keyword>
<keyword id="KW-1185">Reference proteome</keyword>
<accession>Q54HY7</accession>
<name>Y8275_DICDI</name>
<protein>
    <recommendedName>
        <fullName>Uncharacterized protein DDB_G0289137</fullName>
    </recommendedName>
</protein>
<proteinExistence type="predicted"/>
<evidence type="ECO:0000255" key="1"/>
<evidence type="ECO:0000256" key="2">
    <source>
        <dbReference type="SAM" id="MobiDB-lite"/>
    </source>
</evidence>
<organism>
    <name type="scientific">Dictyostelium discoideum</name>
    <name type="common">Social amoeba</name>
    <dbReference type="NCBI Taxonomy" id="44689"/>
    <lineage>
        <taxon>Eukaryota</taxon>
        <taxon>Amoebozoa</taxon>
        <taxon>Evosea</taxon>
        <taxon>Eumycetozoa</taxon>
        <taxon>Dictyostelia</taxon>
        <taxon>Dictyosteliales</taxon>
        <taxon>Dictyosteliaceae</taxon>
        <taxon>Dictyostelium</taxon>
    </lineage>
</organism>
<sequence>MFKRSVSRLFCAPAPAPAPRKQPGGRIQPIGVNLNQSVKKQLNHLEVLERIKKQRKEQKNNRNQVDPIIAKAYEELEEEGFFDDKNREDY</sequence>
<reference key="1">
    <citation type="journal article" date="2005" name="Nature">
        <title>The genome of the social amoeba Dictyostelium discoideum.</title>
        <authorList>
            <person name="Eichinger L."/>
            <person name="Pachebat J.A."/>
            <person name="Gloeckner G."/>
            <person name="Rajandream M.A."/>
            <person name="Sucgang R."/>
            <person name="Berriman M."/>
            <person name="Song J."/>
            <person name="Olsen R."/>
            <person name="Szafranski K."/>
            <person name="Xu Q."/>
            <person name="Tunggal B."/>
            <person name="Kummerfeld S."/>
            <person name="Madera M."/>
            <person name="Konfortov B.A."/>
            <person name="Rivero F."/>
            <person name="Bankier A.T."/>
            <person name="Lehmann R."/>
            <person name="Hamlin N."/>
            <person name="Davies R."/>
            <person name="Gaudet P."/>
            <person name="Fey P."/>
            <person name="Pilcher K."/>
            <person name="Chen G."/>
            <person name="Saunders D."/>
            <person name="Sodergren E.J."/>
            <person name="Davis P."/>
            <person name="Kerhornou A."/>
            <person name="Nie X."/>
            <person name="Hall N."/>
            <person name="Anjard C."/>
            <person name="Hemphill L."/>
            <person name="Bason N."/>
            <person name="Farbrother P."/>
            <person name="Desany B."/>
            <person name="Just E."/>
            <person name="Morio T."/>
            <person name="Rost R."/>
            <person name="Churcher C.M."/>
            <person name="Cooper J."/>
            <person name="Haydock S."/>
            <person name="van Driessche N."/>
            <person name="Cronin A."/>
            <person name="Goodhead I."/>
            <person name="Muzny D.M."/>
            <person name="Mourier T."/>
            <person name="Pain A."/>
            <person name="Lu M."/>
            <person name="Harper D."/>
            <person name="Lindsay R."/>
            <person name="Hauser H."/>
            <person name="James K.D."/>
            <person name="Quiles M."/>
            <person name="Madan Babu M."/>
            <person name="Saito T."/>
            <person name="Buchrieser C."/>
            <person name="Wardroper A."/>
            <person name="Felder M."/>
            <person name="Thangavelu M."/>
            <person name="Johnson D."/>
            <person name="Knights A."/>
            <person name="Loulseged H."/>
            <person name="Mungall K.L."/>
            <person name="Oliver K."/>
            <person name="Price C."/>
            <person name="Quail M.A."/>
            <person name="Urushihara H."/>
            <person name="Hernandez J."/>
            <person name="Rabbinowitsch E."/>
            <person name="Steffen D."/>
            <person name="Sanders M."/>
            <person name="Ma J."/>
            <person name="Kohara Y."/>
            <person name="Sharp S."/>
            <person name="Simmonds M.N."/>
            <person name="Spiegler S."/>
            <person name="Tivey A."/>
            <person name="Sugano S."/>
            <person name="White B."/>
            <person name="Walker D."/>
            <person name="Woodward J.R."/>
            <person name="Winckler T."/>
            <person name="Tanaka Y."/>
            <person name="Shaulsky G."/>
            <person name="Schleicher M."/>
            <person name="Weinstock G.M."/>
            <person name="Rosenthal A."/>
            <person name="Cox E.C."/>
            <person name="Chisholm R.L."/>
            <person name="Gibbs R.A."/>
            <person name="Loomis W.F."/>
            <person name="Platzer M."/>
            <person name="Kay R.R."/>
            <person name="Williams J.G."/>
            <person name="Dear P.H."/>
            <person name="Noegel A.A."/>
            <person name="Barrell B.G."/>
            <person name="Kuspa A."/>
        </authorList>
    </citation>
    <scope>NUCLEOTIDE SEQUENCE [LARGE SCALE GENOMIC DNA]</scope>
    <source>
        <strain>AX4</strain>
    </source>
</reference>
<gene>
    <name type="ORF">DDB_G0289137</name>
</gene>
<dbReference type="EMBL" id="AAFI02000130">
    <property type="protein sequence ID" value="EAL62876.1"/>
    <property type="molecule type" value="Genomic_DNA"/>
</dbReference>
<dbReference type="RefSeq" id="XP_636376.1">
    <property type="nucleotide sequence ID" value="XM_631284.1"/>
</dbReference>
<dbReference type="SMR" id="Q54HY7"/>
<dbReference type="FunCoup" id="Q54HY7">
    <property type="interactions" value="744"/>
</dbReference>
<dbReference type="PaxDb" id="44689-DDB0188275"/>
<dbReference type="EnsemblProtists" id="EAL62876">
    <property type="protein sequence ID" value="EAL62876"/>
    <property type="gene ID" value="DDB_G0289137"/>
</dbReference>
<dbReference type="GeneID" id="8626977"/>
<dbReference type="KEGG" id="ddi:DDB_G0289137"/>
<dbReference type="dictyBase" id="DDB_G0289137"/>
<dbReference type="VEuPathDB" id="AmoebaDB:DDB_G0289137"/>
<dbReference type="eggNOG" id="ENOG502RIE3">
    <property type="taxonomic scope" value="Eukaryota"/>
</dbReference>
<dbReference type="HOGENOM" id="CLU_2445401_0_0_1"/>
<dbReference type="InParanoid" id="Q54HY7"/>
<dbReference type="OMA" id="KNNRANE"/>
<dbReference type="PRO" id="PR:Q54HY7"/>
<dbReference type="Proteomes" id="UP000002195">
    <property type="component" value="Chromosome 5"/>
</dbReference>